<accession>Q8SW19</accession>
<gene>
    <name type="ordered locus">ECU03_1140</name>
</gene>
<dbReference type="EMBL" id="AL590443">
    <property type="protein sequence ID" value="CAD26258.1"/>
    <property type="molecule type" value="Genomic_DNA"/>
</dbReference>
<dbReference type="RefSeq" id="NP_597623.1">
    <property type="nucleotide sequence ID" value="NM_001040987.1"/>
</dbReference>
<dbReference type="SMR" id="Q8SW19"/>
<dbReference type="GeneID" id="858785"/>
<dbReference type="KEGG" id="ecu:ECU03_1140"/>
<dbReference type="VEuPathDB" id="MicrosporidiaDB:ECU03_1140"/>
<dbReference type="HOGENOM" id="CLU_2015252_0_0_1"/>
<dbReference type="InParanoid" id="Q8SW19"/>
<dbReference type="OMA" id="ARILDFC"/>
<dbReference type="OrthoDB" id="2190174at2759"/>
<dbReference type="Proteomes" id="UP000000819">
    <property type="component" value="Chromosome III"/>
</dbReference>
<name>Y3B4_ENCCU</name>
<protein>
    <recommendedName>
        <fullName>Uncharacterized protein ECU03_1140</fullName>
    </recommendedName>
</protein>
<keyword id="KW-1185">Reference proteome</keyword>
<organism>
    <name type="scientific">Encephalitozoon cuniculi (strain GB-M1)</name>
    <name type="common">Microsporidian parasite</name>
    <dbReference type="NCBI Taxonomy" id="284813"/>
    <lineage>
        <taxon>Eukaryota</taxon>
        <taxon>Fungi</taxon>
        <taxon>Fungi incertae sedis</taxon>
        <taxon>Microsporidia</taxon>
        <taxon>Unikaryonidae</taxon>
        <taxon>Encephalitozoon</taxon>
    </lineage>
</organism>
<feature type="chain" id="PRO_0000223086" description="Uncharacterized protein ECU03_1140">
    <location>
        <begin position="1"/>
        <end position="117"/>
    </location>
</feature>
<reference key="1">
    <citation type="journal article" date="2001" name="Nature">
        <title>Genome sequence and gene compaction of the eukaryote parasite Encephalitozoon cuniculi.</title>
        <authorList>
            <person name="Katinka M.D."/>
            <person name="Duprat S."/>
            <person name="Cornillot E."/>
            <person name="Metenier G."/>
            <person name="Thomarat F."/>
            <person name="Prensier G."/>
            <person name="Barbe V."/>
            <person name="Peyretaillade E."/>
            <person name="Brottier P."/>
            <person name="Wincker P."/>
            <person name="Delbac F."/>
            <person name="El Alaoui H."/>
            <person name="Peyret P."/>
            <person name="Saurin W."/>
            <person name="Gouy M."/>
            <person name="Weissenbach J."/>
            <person name="Vivares C.P."/>
        </authorList>
    </citation>
    <scope>NUCLEOTIDE SEQUENCE [LARGE SCALE GENOMIC DNA]</scope>
    <source>
        <strain>GB-M1</strain>
    </source>
</reference>
<proteinExistence type="predicted"/>
<sequence>MTSRVGPPLRILSDSLKKLRRVSGAIFYGRREVSHVEIAGTCIDRGRVFARILDFCGEVLVEIGDQKIALGSSYLLVCKVQARSGGIGLHCKSAKRLGIFEEMFFWAEAVNLEGGLQ</sequence>